<proteinExistence type="inferred from homology"/>
<keyword id="KW-0004">4Fe-4S</keyword>
<keyword id="KW-1003">Cell membrane</keyword>
<keyword id="KW-0408">Iron</keyword>
<keyword id="KW-0411">Iron-sulfur</keyword>
<keyword id="KW-0472">Membrane</keyword>
<keyword id="KW-0479">Metal-binding</keyword>
<keyword id="KW-0520">NAD</keyword>
<keyword id="KW-0874">Quinone</keyword>
<keyword id="KW-1185">Reference proteome</keyword>
<keyword id="KW-0677">Repeat</keyword>
<keyword id="KW-1278">Translocase</keyword>
<keyword id="KW-0830">Ubiquinone</keyword>
<reference key="1">
    <citation type="journal article" date="2009" name="Genome Res.">
        <title>Complete genome of the cellulolytic thermophile Acidothermus cellulolyticus 11B provides insights into its ecophysiological and evolutionary adaptations.</title>
        <authorList>
            <person name="Barabote R.D."/>
            <person name="Xie G."/>
            <person name="Leu D.H."/>
            <person name="Normand P."/>
            <person name="Necsulea A."/>
            <person name="Daubin V."/>
            <person name="Medigue C."/>
            <person name="Adney W.S."/>
            <person name="Xu X.C."/>
            <person name="Lapidus A."/>
            <person name="Parales R.E."/>
            <person name="Detter C."/>
            <person name="Pujic P."/>
            <person name="Bruce D."/>
            <person name="Lavire C."/>
            <person name="Challacombe J.F."/>
            <person name="Brettin T.S."/>
            <person name="Berry A.M."/>
        </authorList>
    </citation>
    <scope>NUCLEOTIDE SEQUENCE [LARGE SCALE GENOMIC DNA]</scope>
    <source>
        <strain>ATCC 43068 / DSM 8971 / 11B</strain>
    </source>
</reference>
<comment type="function">
    <text evidence="1">NDH-1 shuttles electrons from NADH, via FMN and iron-sulfur (Fe-S) centers, to quinones in the respiratory chain. The immediate electron acceptor for the enzyme in this species is believed to be ubiquinone. Couples the redox reaction to proton translocation (for every two electrons transferred, four hydrogen ions are translocated across the cytoplasmic membrane), and thus conserves the redox energy in a proton gradient.</text>
</comment>
<comment type="catalytic activity">
    <reaction evidence="1">
        <text>a quinone + NADH + 5 H(+)(in) = a quinol + NAD(+) + 4 H(+)(out)</text>
        <dbReference type="Rhea" id="RHEA:57888"/>
        <dbReference type="ChEBI" id="CHEBI:15378"/>
        <dbReference type="ChEBI" id="CHEBI:24646"/>
        <dbReference type="ChEBI" id="CHEBI:57540"/>
        <dbReference type="ChEBI" id="CHEBI:57945"/>
        <dbReference type="ChEBI" id="CHEBI:132124"/>
    </reaction>
</comment>
<comment type="cofactor">
    <cofactor evidence="1">
        <name>[4Fe-4S] cluster</name>
        <dbReference type="ChEBI" id="CHEBI:49883"/>
    </cofactor>
    <text evidence="1">Binds 2 [4Fe-4S] clusters per subunit.</text>
</comment>
<comment type="subunit">
    <text evidence="1">NDH-1 is composed of 14 different subunits. Subunits NuoA, H, J, K, L, M, N constitute the membrane sector of the complex.</text>
</comment>
<comment type="subcellular location">
    <subcellularLocation>
        <location evidence="1">Cell membrane</location>
        <topology evidence="1">Peripheral membrane protein</topology>
    </subcellularLocation>
</comment>
<comment type="similarity">
    <text evidence="1">Belongs to the complex I 23 kDa subunit family.</text>
</comment>
<protein>
    <recommendedName>
        <fullName evidence="1">NADH-quinone oxidoreductase subunit I</fullName>
        <ecNumber evidence="1">7.1.1.-</ecNumber>
    </recommendedName>
    <alternativeName>
        <fullName evidence="1">NADH dehydrogenase I subunit I</fullName>
    </alternativeName>
    <alternativeName>
        <fullName evidence="1">NDH-1 subunit I</fullName>
    </alternativeName>
</protein>
<feature type="chain" id="PRO_0000298472" description="NADH-quinone oxidoreductase subunit I">
    <location>
        <begin position="1"/>
        <end position="199"/>
    </location>
</feature>
<feature type="domain" description="4Fe-4S ferredoxin-type 1" evidence="1">
    <location>
        <begin position="45"/>
        <end position="75"/>
    </location>
</feature>
<feature type="domain" description="4Fe-4S ferredoxin-type 2" evidence="1">
    <location>
        <begin position="91"/>
        <end position="120"/>
    </location>
</feature>
<feature type="region of interest" description="Disordered" evidence="2">
    <location>
        <begin position="164"/>
        <end position="199"/>
    </location>
</feature>
<feature type="compositionally biased region" description="Basic and acidic residues" evidence="2">
    <location>
        <begin position="182"/>
        <end position="199"/>
    </location>
</feature>
<feature type="binding site" evidence="1">
    <location>
        <position position="55"/>
    </location>
    <ligand>
        <name>[4Fe-4S] cluster</name>
        <dbReference type="ChEBI" id="CHEBI:49883"/>
        <label>1</label>
    </ligand>
</feature>
<feature type="binding site" evidence="1">
    <location>
        <position position="58"/>
    </location>
    <ligand>
        <name>[4Fe-4S] cluster</name>
        <dbReference type="ChEBI" id="CHEBI:49883"/>
        <label>1</label>
    </ligand>
</feature>
<feature type="binding site" evidence="1">
    <location>
        <position position="61"/>
    </location>
    <ligand>
        <name>[4Fe-4S] cluster</name>
        <dbReference type="ChEBI" id="CHEBI:49883"/>
        <label>1</label>
    </ligand>
</feature>
<feature type="binding site" evidence="1">
    <location>
        <position position="65"/>
    </location>
    <ligand>
        <name>[4Fe-4S] cluster</name>
        <dbReference type="ChEBI" id="CHEBI:49883"/>
        <label>2</label>
    </ligand>
</feature>
<feature type="binding site" evidence="1">
    <location>
        <position position="100"/>
    </location>
    <ligand>
        <name>[4Fe-4S] cluster</name>
        <dbReference type="ChEBI" id="CHEBI:49883"/>
        <label>2</label>
    </ligand>
</feature>
<feature type="binding site" evidence="1">
    <location>
        <position position="103"/>
    </location>
    <ligand>
        <name>[4Fe-4S] cluster</name>
        <dbReference type="ChEBI" id="CHEBI:49883"/>
        <label>2</label>
    </ligand>
</feature>
<feature type="binding site" evidence="1">
    <location>
        <position position="106"/>
    </location>
    <ligand>
        <name>[4Fe-4S] cluster</name>
        <dbReference type="ChEBI" id="CHEBI:49883"/>
        <label>2</label>
    </ligand>
</feature>
<feature type="binding site" evidence="1">
    <location>
        <position position="110"/>
    </location>
    <ligand>
        <name>[4Fe-4S] cluster</name>
        <dbReference type="ChEBI" id="CHEBI:49883"/>
        <label>1</label>
    </ligand>
</feature>
<evidence type="ECO:0000255" key="1">
    <source>
        <dbReference type="HAMAP-Rule" id="MF_01351"/>
    </source>
</evidence>
<evidence type="ECO:0000256" key="2">
    <source>
        <dbReference type="SAM" id="MobiDB-lite"/>
    </source>
</evidence>
<organism>
    <name type="scientific">Acidothermus cellulolyticus (strain ATCC 43068 / DSM 8971 / 11B)</name>
    <dbReference type="NCBI Taxonomy" id="351607"/>
    <lineage>
        <taxon>Bacteria</taxon>
        <taxon>Bacillati</taxon>
        <taxon>Actinomycetota</taxon>
        <taxon>Actinomycetes</taxon>
        <taxon>Acidothermales</taxon>
        <taxon>Acidothermaceae</taxon>
        <taxon>Acidothermus</taxon>
    </lineage>
</organism>
<gene>
    <name evidence="1" type="primary">nuoI</name>
    <name type="ordered locus">Acel_0275</name>
</gene>
<dbReference type="EC" id="7.1.1.-" evidence="1"/>
<dbReference type="EMBL" id="CP000481">
    <property type="protein sequence ID" value="ABK52049.1"/>
    <property type="molecule type" value="Genomic_DNA"/>
</dbReference>
<dbReference type="RefSeq" id="WP_011719112.1">
    <property type="nucleotide sequence ID" value="NC_008578.1"/>
</dbReference>
<dbReference type="SMR" id="A0LRI9"/>
<dbReference type="FunCoup" id="A0LRI9">
    <property type="interactions" value="275"/>
</dbReference>
<dbReference type="STRING" id="351607.Acel_0275"/>
<dbReference type="KEGG" id="ace:Acel_0275"/>
<dbReference type="eggNOG" id="COG1143">
    <property type="taxonomic scope" value="Bacteria"/>
</dbReference>
<dbReference type="HOGENOM" id="CLU_067218_4_0_11"/>
<dbReference type="InParanoid" id="A0LRI9"/>
<dbReference type="OrthoDB" id="9808559at2"/>
<dbReference type="Proteomes" id="UP000008221">
    <property type="component" value="Chromosome"/>
</dbReference>
<dbReference type="GO" id="GO:0005886">
    <property type="term" value="C:plasma membrane"/>
    <property type="evidence" value="ECO:0007669"/>
    <property type="project" value="UniProtKB-SubCell"/>
</dbReference>
<dbReference type="GO" id="GO:0051539">
    <property type="term" value="F:4 iron, 4 sulfur cluster binding"/>
    <property type="evidence" value="ECO:0007669"/>
    <property type="project" value="UniProtKB-KW"/>
</dbReference>
<dbReference type="GO" id="GO:0005506">
    <property type="term" value="F:iron ion binding"/>
    <property type="evidence" value="ECO:0007669"/>
    <property type="project" value="UniProtKB-UniRule"/>
</dbReference>
<dbReference type="GO" id="GO:0050136">
    <property type="term" value="F:NADH:ubiquinone reductase (non-electrogenic) activity"/>
    <property type="evidence" value="ECO:0007669"/>
    <property type="project" value="UniProtKB-UniRule"/>
</dbReference>
<dbReference type="GO" id="GO:0048038">
    <property type="term" value="F:quinone binding"/>
    <property type="evidence" value="ECO:0007669"/>
    <property type="project" value="UniProtKB-KW"/>
</dbReference>
<dbReference type="GO" id="GO:0009060">
    <property type="term" value="P:aerobic respiration"/>
    <property type="evidence" value="ECO:0007669"/>
    <property type="project" value="TreeGrafter"/>
</dbReference>
<dbReference type="FunFam" id="3.30.70.3270:FF:000007">
    <property type="entry name" value="NADH-quinone oxidoreductase subunit I"/>
    <property type="match status" value="1"/>
</dbReference>
<dbReference type="Gene3D" id="3.30.70.3270">
    <property type="match status" value="1"/>
</dbReference>
<dbReference type="HAMAP" id="MF_01351">
    <property type="entry name" value="NDH1_NuoI"/>
    <property type="match status" value="1"/>
</dbReference>
<dbReference type="InterPro" id="IPR017896">
    <property type="entry name" value="4Fe4S_Fe-S-bd"/>
</dbReference>
<dbReference type="InterPro" id="IPR017900">
    <property type="entry name" value="4Fe4S_Fe_S_CS"/>
</dbReference>
<dbReference type="InterPro" id="IPR010226">
    <property type="entry name" value="NADH_quinone_OxRdtase_chainI"/>
</dbReference>
<dbReference type="NCBIfam" id="TIGR01971">
    <property type="entry name" value="NuoI"/>
    <property type="match status" value="1"/>
</dbReference>
<dbReference type="NCBIfam" id="NF004537">
    <property type="entry name" value="PRK05888.1-3"/>
    <property type="match status" value="1"/>
</dbReference>
<dbReference type="PANTHER" id="PTHR10849:SF20">
    <property type="entry name" value="NADH DEHYDROGENASE [UBIQUINONE] IRON-SULFUR PROTEIN 8, MITOCHONDRIAL"/>
    <property type="match status" value="1"/>
</dbReference>
<dbReference type="PANTHER" id="PTHR10849">
    <property type="entry name" value="NADH DEHYDROGENASE UBIQUINONE IRON-SULFUR PROTEIN 8, MITOCHONDRIAL"/>
    <property type="match status" value="1"/>
</dbReference>
<dbReference type="Pfam" id="PF12838">
    <property type="entry name" value="Fer4_7"/>
    <property type="match status" value="1"/>
</dbReference>
<dbReference type="SUPFAM" id="SSF54862">
    <property type="entry name" value="4Fe-4S ferredoxins"/>
    <property type="match status" value="1"/>
</dbReference>
<dbReference type="PROSITE" id="PS00198">
    <property type="entry name" value="4FE4S_FER_1"/>
    <property type="match status" value="2"/>
</dbReference>
<dbReference type="PROSITE" id="PS51379">
    <property type="entry name" value="4FE4S_FER_2"/>
    <property type="match status" value="2"/>
</dbReference>
<sequence>MPNILPGPLRGFGVTFGTMFRRVTTEQYPDEKKPTMPRYHGRHVLNRHPDGLEKCIGCELCAWACPADAIYVEGADNTEEERYSPGERYGRVYQINYLRCIFCGYCIEACPTRALTMSNEYELADDNRADLIYTKEQLLAPLAPGMEPPPHPMRLGDTKDYYRGTPAAHMLSGEDDAASETTLDRSDDHSATYEEAERP</sequence>
<name>NUOI_ACIC1</name>
<accession>A0LRI9</accession>